<feature type="signal peptide" evidence="1">
    <location>
        <begin position="1"/>
        <end position="22"/>
    </location>
</feature>
<feature type="chain" id="PRO_0000350878" description="Uncharacterized protein DDB_G0283449">
    <location>
        <begin position="23"/>
        <end position="81"/>
    </location>
</feature>
<feature type="region of interest" description="Disordered" evidence="2">
    <location>
        <begin position="29"/>
        <end position="81"/>
    </location>
</feature>
<feature type="compositionally biased region" description="Low complexity" evidence="2">
    <location>
        <begin position="30"/>
        <end position="58"/>
    </location>
</feature>
<feature type="compositionally biased region" description="Gly residues" evidence="2">
    <location>
        <begin position="59"/>
        <end position="75"/>
    </location>
</feature>
<keyword id="KW-1185">Reference proteome</keyword>
<keyword id="KW-0964">Secreted</keyword>
<keyword id="KW-0732">Signal</keyword>
<gene>
    <name type="ORF">DDB_G0283449</name>
</gene>
<sequence>MNKKLSIIFLIFALIASVLCSAEDPHLFHSSSTTTTTSSSGGTSGTDSSINTGSSYSGSGSGSGSTGGSGSGSGSGTAKWK</sequence>
<accession>Q54R11</accession>
<dbReference type="EMBL" id="AAFI02000055">
    <property type="protein sequence ID" value="EAL65709.1"/>
    <property type="molecule type" value="Genomic_DNA"/>
</dbReference>
<dbReference type="RefSeq" id="XP_639080.1">
    <property type="nucleotide sequence ID" value="XM_633988.1"/>
</dbReference>
<dbReference type="PaxDb" id="44689-DDB0185526"/>
<dbReference type="EnsemblProtists" id="EAL65709">
    <property type="protein sequence ID" value="EAL65709"/>
    <property type="gene ID" value="DDB_G0283449"/>
</dbReference>
<dbReference type="GeneID" id="8624105"/>
<dbReference type="KEGG" id="ddi:DDB_G0283449"/>
<dbReference type="dictyBase" id="DDB_G0283449"/>
<dbReference type="HOGENOM" id="CLU_2578873_0_0_1"/>
<dbReference type="InParanoid" id="Q54R11"/>
<dbReference type="PRO" id="PR:Q54R11"/>
<dbReference type="Proteomes" id="UP000002195">
    <property type="component" value="Chromosome 4"/>
</dbReference>
<dbReference type="GO" id="GO:0005576">
    <property type="term" value="C:extracellular region"/>
    <property type="evidence" value="ECO:0007669"/>
    <property type="project" value="UniProtKB-SubCell"/>
</dbReference>
<reference key="1">
    <citation type="journal article" date="2005" name="Nature">
        <title>The genome of the social amoeba Dictyostelium discoideum.</title>
        <authorList>
            <person name="Eichinger L."/>
            <person name="Pachebat J.A."/>
            <person name="Gloeckner G."/>
            <person name="Rajandream M.A."/>
            <person name="Sucgang R."/>
            <person name="Berriman M."/>
            <person name="Song J."/>
            <person name="Olsen R."/>
            <person name="Szafranski K."/>
            <person name="Xu Q."/>
            <person name="Tunggal B."/>
            <person name="Kummerfeld S."/>
            <person name="Madera M."/>
            <person name="Konfortov B.A."/>
            <person name="Rivero F."/>
            <person name="Bankier A.T."/>
            <person name="Lehmann R."/>
            <person name="Hamlin N."/>
            <person name="Davies R."/>
            <person name="Gaudet P."/>
            <person name="Fey P."/>
            <person name="Pilcher K."/>
            <person name="Chen G."/>
            <person name="Saunders D."/>
            <person name="Sodergren E.J."/>
            <person name="Davis P."/>
            <person name="Kerhornou A."/>
            <person name="Nie X."/>
            <person name="Hall N."/>
            <person name="Anjard C."/>
            <person name="Hemphill L."/>
            <person name="Bason N."/>
            <person name="Farbrother P."/>
            <person name="Desany B."/>
            <person name="Just E."/>
            <person name="Morio T."/>
            <person name="Rost R."/>
            <person name="Churcher C.M."/>
            <person name="Cooper J."/>
            <person name="Haydock S."/>
            <person name="van Driessche N."/>
            <person name="Cronin A."/>
            <person name="Goodhead I."/>
            <person name="Muzny D.M."/>
            <person name="Mourier T."/>
            <person name="Pain A."/>
            <person name="Lu M."/>
            <person name="Harper D."/>
            <person name="Lindsay R."/>
            <person name="Hauser H."/>
            <person name="James K.D."/>
            <person name="Quiles M."/>
            <person name="Madan Babu M."/>
            <person name="Saito T."/>
            <person name="Buchrieser C."/>
            <person name="Wardroper A."/>
            <person name="Felder M."/>
            <person name="Thangavelu M."/>
            <person name="Johnson D."/>
            <person name="Knights A."/>
            <person name="Loulseged H."/>
            <person name="Mungall K.L."/>
            <person name="Oliver K."/>
            <person name="Price C."/>
            <person name="Quail M.A."/>
            <person name="Urushihara H."/>
            <person name="Hernandez J."/>
            <person name="Rabbinowitsch E."/>
            <person name="Steffen D."/>
            <person name="Sanders M."/>
            <person name="Ma J."/>
            <person name="Kohara Y."/>
            <person name="Sharp S."/>
            <person name="Simmonds M.N."/>
            <person name="Spiegler S."/>
            <person name="Tivey A."/>
            <person name="Sugano S."/>
            <person name="White B."/>
            <person name="Walker D."/>
            <person name="Woodward J.R."/>
            <person name="Winckler T."/>
            <person name="Tanaka Y."/>
            <person name="Shaulsky G."/>
            <person name="Schleicher M."/>
            <person name="Weinstock G.M."/>
            <person name="Rosenthal A."/>
            <person name="Cox E.C."/>
            <person name="Chisholm R.L."/>
            <person name="Gibbs R.A."/>
            <person name="Loomis W.F."/>
            <person name="Platzer M."/>
            <person name="Kay R.R."/>
            <person name="Williams J.G."/>
            <person name="Dear P.H."/>
            <person name="Noegel A.A."/>
            <person name="Barrell B.G."/>
            <person name="Kuspa A."/>
        </authorList>
    </citation>
    <scope>NUCLEOTIDE SEQUENCE [LARGE SCALE GENOMIC DNA]</scope>
    <source>
        <strain>AX4</strain>
    </source>
</reference>
<name>Y5526_DICDI</name>
<proteinExistence type="inferred from homology"/>
<organism>
    <name type="scientific">Dictyostelium discoideum</name>
    <name type="common">Social amoeba</name>
    <dbReference type="NCBI Taxonomy" id="44689"/>
    <lineage>
        <taxon>Eukaryota</taxon>
        <taxon>Amoebozoa</taxon>
        <taxon>Evosea</taxon>
        <taxon>Eumycetozoa</taxon>
        <taxon>Dictyostelia</taxon>
        <taxon>Dictyosteliales</taxon>
        <taxon>Dictyosteliaceae</taxon>
        <taxon>Dictyostelium</taxon>
    </lineage>
</organism>
<comment type="subcellular location">
    <subcellularLocation>
        <location evidence="3">Secreted</location>
    </subcellularLocation>
</comment>
<evidence type="ECO:0000255" key="1"/>
<evidence type="ECO:0000256" key="2">
    <source>
        <dbReference type="SAM" id="MobiDB-lite"/>
    </source>
</evidence>
<evidence type="ECO:0000305" key="3"/>
<protein>
    <recommendedName>
        <fullName>Uncharacterized protein DDB_G0283449</fullName>
    </recommendedName>
</protein>